<comment type="function">
    <text evidence="1">Responsible for synthesis of pseudouridine from uracil-55 in the psi GC loop of transfer RNAs.</text>
</comment>
<comment type="catalytic activity">
    <reaction evidence="1">
        <text>uridine(55) in tRNA = pseudouridine(55) in tRNA</text>
        <dbReference type="Rhea" id="RHEA:42532"/>
        <dbReference type="Rhea" id="RHEA-COMP:10101"/>
        <dbReference type="Rhea" id="RHEA-COMP:10102"/>
        <dbReference type="ChEBI" id="CHEBI:65314"/>
        <dbReference type="ChEBI" id="CHEBI:65315"/>
        <dbReference type="EC" id="5.4.99.25"/>
    </reaction>
</comment>
<comment type="similarity">
    <text evidence="1">Belongs to the pseudouridine synthase TruB family. Type 1 subfamily.</text>
</comment>
<name>TRUB_MYCSS</name>
<sequence>MSGAGVGGGIVIVDKPAGMTSHDVVGRCRRIFGTRKVGHAGTLDPMATGVLVVGIDRATKLLGLLTATDKSYEATIRLGQTTTTEDAEGDVVETTPATGITDEQIGHAVAALRGEIDQVPSAVSAIKVGGQRAYKLAREGQTVELAARRVRIDRFEVLAIRRVDGFVDVDVAVDCSSGTYIRALARDVGVTLGVGGHLTLLRRTRVGRFGLDEAYPLDALADEPRLSHSLDEACLLSFPRRDLTPAEAESTRHGRALAPAGIDGVYAAAAPDGSVLALLEDGPQRTKSVVVLRPATL</sequence>
<gene>
    <name evidence="1" type="primary">truB</name>
    <name type="ordered locus">Mmcs_2095</name>
</gene>
<reference key="1">
    <citation type="submission" date="2006-06" db="EMBL/GenBank/DDBJ databases">
        <title>Complete sequence of chromosome of Mycobacterium sp. MCS.</title>
        <authorList>
            <consortium name="US DOE Joint Genome Institute"/>
            <person name="Copeland A."/>
            <person name="Lucas S."/>
            <person name="Lapidus A."/>
            <person name="Barry K."/>
            <person name="Detter J.C."/>
            <person name="Glavina del Rio T."/>
            <person name="Hammon N."/>
            <person name="Israni S."/>
            <person name="Dalin E."/>
            <person name="Tice H."/>
            <person name="Pitluck S."/>
            <person name="Martinez M."/>
            <person name="Schmutz J."/>
            <person name="Larimer F."/>
            <person name="Land M."/>
            <person name="Hauser L."/>
            <person name="Kyrpides N."/>
            <person name="Kim E."/>
            <person name="Miller C.D."/>
            <person name="Hughes J.E."/>
            <person name="Anderson A.J."/>
            <person name="Sims R.C."/>
            <person name="Richardson P."/>
        </authorList>
    </citation>
    <scope>NUCLEOTIDE SEQUENCE [LARGE SCALE GENOMIC DNA]</scope>
    <source>
        <strain>MCS</strain>
    </source>
</reference>
<evidence type="ECO:0000255" key="1">
    <source>
        <dbReference type="HAMAP-Rule" id="MF_01080"/>
    </source>
</evidence>
<dbReference type="EC" id="5.4.99.25" evidence="1"/>
<dbReference type="EMBL" id="CP000384">
    <property type="protein sequence ID" value="ABG08203.1"/>
    <property type="molecule type" value="Genomic_DNA"/>
</dbReference>
<dbReference type="SMR" id="Q1BA81"/>
<dbReference type="KEGG" id="mmc:Mmcs_2095"/>
<dbReference type="HOGENOM" id="CLU_032087_0_0_11"/>
<dbReference type="BioCyc" id="MSP164756:G1G6O-2141-MONOMER"/>
<dbReference type="GO" id="GO:0003723">
    <property type="term" value="F:RNA binding"/>
    <property type="evidence" value="ECO:0007669"/>
    <property type="project" value="InterPro"/>
</dbReference>
<dbReference type="GO" id="GO:0160148">
    <property type="term" value="F:tRNA pseudouridine(55) synthase activity"/>
    <property type="evidence" value="ECO:0007669"/>
    <property type="project" value="UniProtKB-EC"/>
</dbReference>
<dbReference type="GO" id="GO:1990481">
    <property type="term" value="P:mRNA pseudouridine synthesis"/>
    <property type="evidence" value="ECO:0007669"/>
    <property type="project" value="TreeGrafter"/>
</dbReference>
<dbReference type="GO" id="GO:0031119">
    <property type="term" value="P:tRNA pseudouridine synthesis"/>
    <property type="evidence" value="ECO:0007669"/>
    <property type="project" value="UniProtKB-UniRule"/>
</dbReference>
<dbReference type="CDD" id="cd02573">
    <property type="entry name" value="PseudoU_synth_EcTruB"/>
    <property type="match status" value="1"/>
</dbReference>
<dbReference type="FunFam" id="3.30.2350.10:FF:000011">
    <property type="entry name" value="tRNA pseudouridine synthase B"/>
    <property type="match status" value="1"/>
</dbReference>
<dbReference type="Gene3D" id="3.30.2350.10">
    <property type="entry name" value="Pseudouridine synthase"/>
    <property type="match status" value="1"/>
</dbReference>
<dbReference type="Gene3D" id="2.30.130.10">
    <property type="entry name" value="PUA domain"/>
    <property type="match status" value="1"/>
</dbReference>
<dbReference type="HAMAP" id="MF_01080">
    <property type="entry name" value="TruB_bact"/>
    <property type="match status" value="1"/>
</dbReference>
<dbReference type="InterPro" id="IPR020103">
    <property type="entry name" value="PsdUridine_synth_cat_dom_sf"/>
</dbReference>
<dbReference type="InterPro" id="IPR002501">
    <property type="entry name" value="PsdUridine_synth_N"/>
</dbReference>
<dbReference type="InterPro" id="IPR015947">
    <property type="entry name" value="PUA-like_sf"/>
</dbReference>
<dbReference type="InterPro" id="IPR036974">
    <property type="entry name" value="PUA_sf"/>
</dbReference>
<dbReference type="InterPro" id="IPR015225">
    <property type="entry name" value="tRNA_psdUridine_synth_fam2_C"/>
</dbReference>
<dbReference type="InterPro" id="IPR014780">
    <property type="entry name" value="tRNA_psdUridine_synth_TruB"/>
</dbReference>
<dbReference type="InterPro" id="IPR032819">
    <property type="entry name" value="TruB_C"/>
</dbReference>
<dbReference type="NCBIfam" id="TIGR00431">
    <property type="entry name" value="TruB"/>
    <property type="match status" value="1"/>
</dbReference>
<dbReference type="PANTHER" id="PTHR13767:SF2">
    <property type="entry name" value="PSEUDOURIDYLATE SYNTHASE TRUB1"/>
    <property type="match status" value="1"/>
</dbReference>
<dbReference type="PANTHER" id="PTHR13767">
    <property type="entry name" value="TRNA-PSEUDOURIDINE SYNTHASE"/>
    <property type="match status" value="1"/>
</dbReference>
<dbReference type="Pfam" id="PF09142">
    <property type="entry name" value="TruB_C"/>
    <property type="match status" value="1"/>
</dbReference>
<dbReference type="Pfam" id="PF16198">
    <property type="entry name" value="TruB_C_2"/>
    <property type="match status" value="1"/>
</dbReference>
<dbReference type="Pfam" id="PF01509">
    <property type="entry name" value="TruB_N"/>
    <property type="match status" value="1"/>
</dbReference>
<dbReference type="SUPFAM" id="SSF55120">
    <property type="entry name" value="Pseudouridine synthase"/>
    <property type="match status" value="1"/>
</dbReference>
<dbReference type="SUPFAM" id="SSF88697">
    <property type="entry name" value="PUA domain-like"/>
    <property type="match status" value="1"/>
</dbReference>
<protein>
    <recommendedName>
        <fullName evidence="1">tRNA pseudouridine synthase B</fullName>
        <ecNumber evidence="1">5.4.99.25</ecNumber>
    </recommendedName>
    <alternativeName>
        <fullName evidence="1">tRNA pseudouridine(55) synthase</fullName>
        <shortName evidence="1">Psi55 synthase</shortName>
    </alternativeName>
    <alternativeName>
        <fullName evidence="1">tRNA pseudouridylate synthase</fullName>
    </alternativeName>
    <alternativeName>
        <fullName evidence="1">tRNA-uridine isomerase</fullName>
    </alternativeName>
</protein>
<accession>Q1BA81</accession>
<proteinExistence type="inferred from homology"/>
<keyword id="KW-0413">Isomerase</keyword>
<keyword id="KW-0819">tRNA processing</keyword>
<feature type="chain" id="PRO_1000149828" description="tRNA pseudouridine synthase B">
    <location>
        <begin position="1"/>
        <end position="297"/>
    </location>
</feature>
<feature type="active site" description="Nucleophile" evidence="1">
    <location>
        <position position="44"/>
    </location>
</feature>
<organism>
    <name type="scientific">Mycobacterium sp. (strain MCS)</name>
    <dbReference type="NCBI Taxonomy" id="164756"/>
    <lineage>
        <taxon>Bacteria</taxon>
        <taxon>Bacillati</taxon>
        <taxon>Actinomycetota</taxon>
        <taxon>Actinomycetes</taxon>
        <taxon>Mycobacteriales</taxon>
        <taxon>Mycobacteriaceae</taxon>
        <taxon>Mycobacterium</taxon>
    </lineage>
</organism>